<gene>
    <name evidence="1" type="primary">glyQS</name>
    <name type="ordered locus">SAB1437</name>
</gene>
<accession>Q2YT14</accession>
<proteinExistence type="inferred from homology"/>
<keyword id="KW-0030">Aminoacyl-tRNA synthetase</keyword>
<keyword id="KW-0067">ATP-binding</keyword>
<keyword id="KW-0963">Cytoplasm</keyword>
<keyword id="KW-0436">Ligase</keyword>
<keyword id="KW-0547">Nucleotide-binding</keyword>
<keyword id="KW-0648">Protein biosynthesis</keyword>
<name>SYG_STAAB</name>
<feature type="chain" id="PRO_1000047386" description="Glycine--tRNA ligase">
    <location>
        <begin position="1"/>
        <end position="463"/>
    </location>
</feature>
<feature type="binding site" evidence="1">
    <location>
        <position position="98"/>
    </location>
    <ligand>
        <name>substrate</name>
    </ligand>
</feature>
<feature type="binding site" evidence="1">
    <location>
        <position position="174"/>
    </location>
    <ligand>
        <name>substrate</name>
    </ligand>
</feature>
<feature type="binding site" evidence="1">
    <location>
        <begin position="206"/>
        <end position="208"/>
    </location>
    <ligand>
        <name>ATP</name>
        <dbReference type="ChEBI" id="CHEBI:30616"/>
    </ligand>
</feature>
<feature type="binding site" evidence="1">
    <location>
        <begin position="216"/>
        <end position="221"/>
    </location>
    <ligand>
        <name>ATP</name>
        <dbReference type="ChEBI" id="CHEBI:30616"/>
    </ligand>
</feature>
<feature type="binding site" evidence="1">
    <location>
        <begin position="221"/>
        <end position="225"/>
    </location>
    <ligand>
        <name>substrate</name>
    </ligand>
</feature>
<feature type="binding site" evidence="1">
    <location>
        <begin position="290"/>
        <end position="291"/>
    </location>
    <ligand>
        <name>ATP</name>
        <dbReference type="ChEBI" id="CHEBI:30616"/>
    </ligand>
</feature>
<feature type="binding site" evidence="1">
    <location>
        <begin position="330"/>
        <end position="334"/>
    </location>
    <ligand>
        <name>substrate</name>
    </ligand>
</feature>
<feature type="binding site" evidence="1">
    <location>
        <begin position="334"/>
        <end position="337"/>
    </location>
    <ligand>
        <name>ATP</name>
        <dbReference type="ChEBI" id="CHEBI:30616"/>
    </ligand>
</feature>
<sequence length="463" mass="53634">MAKDMDTIVSLAKHRGFVFPGSDIYGGLSNTWDYGPLGVELKNNVKKAWWQKFITQSPFNIGIDAAILMNPKVWEASGHLNNFNDPMIDNKDSKIRYRADKLIEDYMQDVKGDENFIADGLSFEQMKKIIDDEGIVCPVSKTANWTEIRQFNLMFKTFQGVTEDSTNEIFLRPETAQGIFVNYKNVQRSMRKKLPFGIGQIGKSFRNEITPGNFIFRTREFEQMELEFFCKPGEEIEWQNYWKTFASDWLTSLNMSSENMRLRDHDEDELSHYSNATTDIEYKFPFGWGELWGIASRTDFDLRKHAEHSGEDFRYHDPETNEKYIPYCIEPSLGADRVTLAFLCDAYDEEGVEGSKDARTVLHFHPALAPYKAAILPLSKKLSGEAIKIFEQLSSKFSIDFDESQSIGKRYRRQDEIGTPYCVTFDFDSLEDNQVTVRDRDSMEQVRMPISELEAFLTEKTKF</sequence>
<organism>
    <name type="scientific">Staphylococcus aureus (strain bovine RF122 / ET3-1)</name>
    <dbReference type="NCBI Taxonomy" id="273036"/>
    <lineage>
        <taxon>Bacteria</taxon>
        <taxon>Bacillati</taxon>
        <taxon>Bacillota</taxon>
        <taxon>Bacilli</taxon>
        <taxon>Bacillales</taxon>
        <taxon>Staphylococcaceae</taxon>
        <taxon>Staphylococcus</taxon>
    </lineage>
</organism>
<reference key="1">
    <citation type="journal article" date="2007" name="PLoS ONE">
        <title>Molecular correlates of host specialization in Staphylococcus aureus.</title>
        <authorList>
            <person name="Herron-Olson L."/>
            <person name="Fitzgerald J.R."/>
            <person name="Musser J.M."/>
            <person name="Kapur V."/>
        </authorList>
    </citation>
    <scope>NUCLEOTIDE SEQUENCE [LARGE SCALE GENOMIC DNA]</scope>
    <source>
        <strain>bovine RF122 / ET3-1</strain>
    </source>
</reference>
<protein>
    <recommendedName>
        <fullName evidence="1">Glycine--tRNA ligase</fullName>
        <ecNumber evidence="1">6.1.1.14</ecNumber>
    </recommendedName>
    <alternativeName>
        <fullName evidence="1">Glycyl-tRNA synthetase</fullName>
        <shortName evidence="1">GlyRS</shortName>
    </alternativeName>
</protein>
<dbReference type="EC" id="6.1.1.14" evidence="1"/>
<dbReference type="EMBL" id="AJ938182">
    <property type="protein sequence ID" value="CAI81126.1"/>
    <property type="molecule type" value="Genomic_DNA"/>
</dbReference>
<dbReference type="RefSeq" id="WP_001030073.1">
    <property type="nucleotide sequence ID" value="NC_007622.1"/>
</dbReference>
<dbReference type="SMR" id="Q2YT14"/>
<dbReference type="KEGG" id="sab:SAB1437"/>
<dbReference type="HOGENOM" id="CLU_015515_2_1_9"/>
<dbReference type="GO" id="GO:0005737">
    <property type="term" value="C:cytoplasm"/>
    <property type="evidence" value="ECO:0007669"/>
    <property type="project" value="UniProtKB-SubCell"/>
</dbReference>
<dbReference type="GO" id="GO:0005524">
    <property type="term" value="F:ATP binding"/>
    <property type="evidence" value="ECO:0007669"/>
    <property type="project" value="UniProtKB-UniRule"/>
</dbReference>
<dbReference type="GO" id="GO:0140096">
    <property type="term" value="F:catalytic activity, acting on a protein"/>
    <property type="evidence" value="ECO:0007669"/>
    <property type="project" value="UniProtKB-ARBA"/>
</dbReference>
<dbReference type="GO" id="GO:0004820">
    <property type="term" value="F:glycine-tRNA ligase activity"/>
    <property type="evidence" value="ECO:0000250"/>
    <property type="project" value="UniProtKB"/>
</dbReference>
<dbReference type="GO" id="GO:0046983">
    <property type="term" value="F:protein dimerization activity"/>
    <property type="evidence" value="ECO:0000250"/>
    <property type="project" value="UniProtKB"/>
</dbReference>
<dbReference type="GO" id="GO:0016740">
    <property type="term" value="F:transferase activity"/>
    <property type="evidence" value="ECO:0007669"/>
    <property type="project" value="UniProtKB-ARBA"/>
</dbReference>
<dbReference type="GO" id="GO:0006426">
    <property type="term" value="P:glycyl-tRNA aminoacylation"/>
    <property type="evidence" value="ECO:0007669"/>
    <property type="project" value="UniProtKB-UniRule"/>
</dbReference>
<dbReference type="CDD" id="cd00774">
    <property type="entry name" value="GlyRS-like_core"/>
    <property type="match status" value="1"/>
</dbReference>
<dbReference type="CDD" id="cd00858">
    <property type="entry name" value="GlyRS_anticodon"/>
    <property type="match status" value="1"/>
</dbReference>
<dbReference type="FunFam" id="3.40.50.800:FF:000002">
    <property type="entry name" value="Glycine--tRNA ligase"/>
    <property type="match status" value="1"/>
</dbReference>
<dbReference type="Gene3D" id="3.30.40.230">
    <property type="match status" value="1"/>
</dbReference>
<dbReference type="Gene3D" id="3.40.50.800">
    <property type="entry name" value="Anticodon-binding domain"/>
    <property type="match status" value="1"/>
</dbReference>
<dbReference type="Gene3D" id="3.30.930.10">
    <property type="entry name" value="Bira Bifunctional Protein, Domain 2"/>
    <property type="match status" value="1"/>
</dbReference>
<dbReference type="HAMAP" id="MF_00253_B">
    <property type="entry name" value="Gly_tRNA_synth_B"/>
    <property type="match status" value="1"/>
</dbReference>
<dbReference type="InterPro" id="IPR002314">
    <property type="entry name" value="aa-tRNA-synt_IIb"/>
</dbReference>
<dbReference type="InterPro" id="IPR006195">
    <property type="entry name" value="aa-tRNA-synth_II"/>
</dbReference>
<dbReference type="InterPro" id="IPR045864">
    <property type="entry name" value="aa-tRNA-synth_II/BPL/LPL"/>
</dbReference>
<dbReference type="InterPro" id="IPR004154">
    <property type="entry name" value="Anticodon-bd"/>
</dbReference>
<dbReference type="InterPro" id="IPR036621">
    <property type="entry name" value="Anticodon-bd_dom_sf"/>
</dbReference>
<dbReference type="InterPro" id="IPR027031">
    <property type="entry name" value="Gly-tRNA_synthase/POLG2"/>
</dbReference>
<dbReference type="InterPro" id="IPR022961">
    <property type="entry name" value="Gly_tRNA_ligase_bac"/>
</dbReference>
<dbReference type="InterPro" id="IPR033731">
    <property type="entry name" value="GlyRS-like_core"/>
</dbReference>
<dbReference type="InterPro" id="IPR002315">
    <property type="entry name" value="tRNA-synt_gly"/>
</dbReference>
<dbReference type="NCBIfam" id="TIGR00389">
    <property type="entry name" value="glyS_dimeric"/>
    <property type="match status" value="1"/>
</dbReference>
<dbReference type="NCBIfam" id="NF003211">
    <property type="entry name" value="PRK04173.1"/>
    <property type="match status" value="1"/>
</dbReference>
<dbReference type="PANTHER" id="PTHR10745:SF8">
    <property type="entry name" value="DNA POLYMERASE SUBUNIT GAMMA-2, MITOCHONDRIAL"/>
    <property type="match status" value="1"/>
</dbReference>
<dbReference type="PANTHER" id="PTHR10745">
    <property type="entry name" value="GLYCYL-TRNA SYNTHETASE/DNA POLYMERASE SUBUNIT GAMMA-2"/>
    <property type="match status" value="1"/>
</dbReference>
<dbReference type="Pfam" id="PF03129">
    <property type="entry name" value="HGTP_anticodon"/>
    <property type="match status" value="1"/>
</dbReference>
<dbReference type="Pfam" id="PF00587">
    <property type="entry name" value="tRNA-synt_2b"/>
    <property type="match status" value="1"/>
</dbReference>
<dbReference type="PRINTS" id="PR01043">
    <property type="entry name" value="TRNASYNTHGLY"/>
</dbReference>
<dbReference type="SUPFAM" id="SSF52954">
    <property type="entry name" value="Class II aaRS ABD-related"/>
    <property type="match status" value="1"/>
</dbReference>
<dbReference type="SUPFAM" id="SSF55681">
    <property type="entry name" value="Class II aaRS and biotin synthetases"/>
    <property type="match status" value="1"/>
</dbReference>
<dbReference type="PROSITE" id="PS50862">
    <property type="entry name" value="AA_TRNA_LIGASE_II"/>
    <property type="match status" value="1"/>
</dbReference>
<evidence type="ECO:0000255" key="1">
    <source>
        <dbReference type="HAMAP-Rule" id="MF_00253"/>
    </source>
</evidence>
<comment type="function">
    <text evidence="1">Catalyzes the attachment of glycine to tRNA(Gly).</text>
</comment>
<comment type="catalytic activity">
    <reaction evidence="1">
        <text>tRNA(Gly) + glycine + ATP = glycyl-tRNA(Gly) + AMP + diphosphate</text>
        <dbReference type="Rhea" id="RHEA:16013"/>
        <dbReference type="Rhea" id="RHEA-COMP:9664"/>
        <dbReference type="Rhea" id="RHEA-COMP:9683"/>
        <dbReference type="ChEBI" id="CHEBI:30616"/>
        <dbReference type="ChEBI" id="CHEBI:33019"/>
        <dbReference type="ChEBI" id="CHEBI:57305"/>
        <dbReference type="ChEBI" id="CHEBI:78442"/>
        <dbReference type="ChEBI" id="CHEBI:78522"/>
        <dbReference type="ChEBI" id="CHEBI:456215"/>
        <dbReference type="EC" id="6.1.1.14"/>
    </reaction>
</comment>
<comment type="subunit">
    <text evidence="1">Homodimer.</text>
</comment>
<comment type="subcellular location">
    <subcellularLocation>
        <location evidence="1">Cytoplasm</location>
    </subcellularLocation>
</comment>
<comment type="similarity">
    <text evidence="1">Belongs to the class-II aminoacyl-tRNA synthetase family.</text>
</comment>